<name>CAPV_PSEU5</name>
<gene>
    <name evidence="5" type="primary">capV</name>
    <name type="ORF">Q024_03602</name>
</gene>
<proteinExistence type="evidence at protein level"/>
<feature type="chain" id="PRO_0000459514" description="cGAMP-activated phospholipase">
    <location>
        <begin position="1"/>
        <end position="333"/>
    </location>
</feature>
<feature type="domain" description="PNPLA" evidence="2">
    <location>
        <begin position="10"/>
        <end position="191"/>
    </location>
</feature>
<feature type="short sequence motif" description="GXGXXG" evidence="2">
    <location>
        <begin position="14"/>
        <end position="19"/>
    </location>
</feature>
<feature type="short sequence motif" description="GXSXG" evidence="2">
    <location>
        <begin position="46"/>
        <end position="50"/>
    </location>
</feature>
<feature type="short sequence motif" description="DGA/G" evidence="2">
    <location>
        <begin position="178"/>
        <end position="180"/>
    </location>
</feature>
<feature type="active site" description="Nucleophile" evidence="2">
    <location>
        <position position="48"/>
    </location>
</feature>
<feature type="active site" description="Proton acceptor" evidence="2">
    <location>
        <position position="178"/>
    </location>
</feature>
<feature type="mutagenesis site" description="Loss of defense against phage PaMx41." evidence="3">
    <original>S</original>
    <variation>A</variation>
    <location>
        <position position="48"/>
    </location>
</feature>
<keyword id="KW-0051">Antiviral defense</keyword>
<keyword id="KW-0378">Hydrolase</keyword>
<keyword id="KW-0442">Lipid degradation</keyword>
<keyword id="KW-0443">Lipid metabolism</keyword>
<organism>
    <name type="scientific">Pseudomonas aeruginosa (strain BWHPSA011 / Pa011)</name>
    <dbReference type="NCBI Taxonomy" id="1402511"/>
    <lineage>
        <taxon>Bacteria</taxon>
        <taxon>Pseudomonadati</taxon>
        <taxon>Pseudomonadota</taxon>
        <taxon>Gammaproteobacteria</taxon>
        <taxon>Pseudomonadales</taxon>
        <taxon>Pseudomonadaceae</taxon>
        <taxon>Pseudomonas</taxon>
    </lineage>
</organism>
<protein>
    <recommendedName>
        <fullName evidence="5">cGAMP-activated phospholipase</fullName>
        <ecNumber evidence="1">3.1.1.32</ecNumber>
    </recommendedName>
    <alternativeName>
        <fullName>3',3'-cGAMP receptor CapV</fullName>
    </alternativeName>
</protein>
<comment type="function">
    <text evidence="3 4 5">Effector phospholipase of a CBASS antiviral system (PubMed:36750095). CBASS (cyclic oligonucleotide-based antiphage signaling system) provides immunity against bacteriophages. The CD-NTase protein (CdnA) synthesizes cyclic nucleotides in response to infection; these serve as specific second messenger signals. The signals activate a diverse range of effectors, leading to bacterial cell death and thus abortive phage infection (PubMed:36750095). A type II-A(GA) CBASS system (PubMed:30787435, PubMed:36750095).</text>
</comment>
<comment type="function">
    <text evidence="1 3">Phospholipase that is activated upon binding to the cyclic dinucleotide (CDN) second messenger 3',3'-cyclic GMP-AMP (cGAMP) (PubMed:36750095). Degrades phospholipids in the cell membrane (By similarity).</text>
</comment>
<comment type="function">
    <text evidence="3">The capV-cdnA-cap2-cap3 operon provides about 10(4)-fold protection in strain BWHPSA011 against infection by phage PaMx41 (PubMed:36750095). In P.aeruginosa strain PAO1 it confers protection against phages PaMx41 and JBD18 but not JBD67 (JBD18 and JBD67 do not replicate in BWHPSA011 / Pa011) (PubMed:36750095). When acb2 in JBD67 is deleted this CBASS operon then protects against JDB67 also (PubMed:36750095). This CBASS system limits prophage induction of lysogenized JBD67 as well as viral lytic replication (PubMed:36750095).</text>
</comment>
<comment type="catalytic activity">
    <reaction evidence="1 7">
        <text>a 1,2-diacyl-sn-glycero-3-phosphocholine + H2O = a 2-acyl-sn-glycero-3-phosphocholine + a fatty acid + H(+)</text>
        <dbReference type="Rhea" id="RHEA:18689"/>
        <dbReference type="ChEBI" id="CHEBI:15377"/>
        <dbReference type="ChEBI" id="CHEBI:15378"/>
        <dbReference type="ChEBI" id="CHEBI:28868"/>
        <dbReference type="ChEBI" id="CHEBI:57643"/>
        <dbReference type="ChEBI" id="CHEBI:57875"/>
        <dbReference type="EC" id="3.1.1.32"/>
    </reaction>
    <physiologicalReaction direction="left-to-right" evidence="1">
        <dbReference type="Rhea" id="RHEA:18690"/>
    </physiologicalReaction>
</comment>
<comment type="catalytic activity">
    <reaction evidence="1 7">
        <text>1,2-di-(9Z-octadecenoyl)-sn-glycero-3-phosphoethanolamine + 2 H2O = sn-glycero-3-phosphoethanolamine + 2 (9Z)-octadecenoate + 2 H(+)</text>
        <dbReference type="Rhea" id="RHEA:60624"/>
        <dbReference type="ChEBI" id="CHEBI:15377"/>
        <dbReference type="ChEBI" id="CHEBI:15378"/>
        <dbReference type="ChEBI" id="CHEBI:30823"/>
        <dbReference type="ChEBI" id="CHEBI:74986"/>
        <dbReference type="ChEBI" id="CHEBI:143890"/>
    </reaction>
    <physiologicalReaction direction="left-to-right" evidence="1">
        <dbReference type="Rhea" id="RHEA:60625"/>
    </physiologicalReaction>
</comment>
<comment type="activity regulation">
    <text evidence="3">Phospholipase activity is specifically activated upon cGAMP binding, which is produced by the cognate cyclic nucleotide synthase encoded in the same operon (PubMed:36750095). Is not activated by cyclic dinucleotides 2',3'-cGAMP, c-diAMP or 3',3'-c-diGMP (PubMed:36750095).</text>
</comment>
<comment type="induction">
    <text evidence="7">Part of a CBASS operon consisting of capV-cdnA-cap2-cap3.</text>
</comment>
<comment type="disruption phenotype">
    <text evidence="3">Deletion of the capV-cdnA-cap2-cap3 operon (plus neighboring gene Q024_03603) results in about 10(4) higher titer of phage PaMx41 in this strain.</text>
</comment>
<comment type="similarity">
    <text evidence="6">Belongs to the patatin family.</text>
</comment>
<dbReference type="EC" id="3.1.1.32" evidence="1"/>
<dbReference type="EMBL" id="AXQR01000012">
    <property type="protein sequence ID" value="ERW74313.1"/>
    <property type="molecule type" value="Genomic_DNA"/>
</dbReference>
<dbReference type="RefSeq" id="WP_023121146.1">
    <property type="nucleotide sequence ID" value="NZ_KI519087.1"/>
</dbReference>
<dbReference type="SMR" id="P0DX85"/>
<dbReference type="GO" id="GO:0016787">
    <property type="term" value="F:hydrolase activity"/>
    <property type="evidence" value="ECO:0007669"/>
    <property type="project" value="UniProtKB-KW"/>
</dbReference>
<dbReference type="GO" id="GO:0051607">
    <property type="term" value="P:defense response to virus"/>
    <property type="evidence" value="ECO:0007669"/>
    <property type="project" value="UniProtKB-KW"/>
</dbReference>
<dbReference type="GO" id="GO:0016042">
    <property type="term" value="P:lipid catabolic process"/>
    <property type="evidence" value="ECO:0007669"/>
    <property type="project" value="UniProtKB-KW"/>
</dbReference>
<dbReference type="CDD" id="cd07199">
    <property type="entry name" value="Pat17_PNPLA8_PNPLA9_like"/>
    <property type="match status" value="1"/>
</dbReference>
<dbReference type="Gene3D" id="3.40.1090.10">
    <property type="entry name" value="Cytosolic phospholipase A2 catalytic domain"/>
    <property type="match status" value="1"/>
</dbReference>
<dbReference type="InterPro" id="IPR016035">
    <property type="entry name" value="Acyl_Trfase/lysoPLipase"/>
</dbReference>
<dbReference type="InterPro" id="IPR002641">
    <property type="entry name" value="PNPLA_dom"/>
</dbReference>
<dbReference type="InterPro" id="IPR047156">
    <property type="entry name" value="Teg/CotR/CapV-like"/>
</dbReference>
<dbReference type="NCBIfam" id="NF041079">
    <property type="entry name" value="CBASS_lipase"/>
    <property type="match status" value="1"/>
</dbReference>
<dbReference type="PANTHER" id="PTHR24138">
    <property type="entry name" value="INTRACELLLAR PHOSPHOLIPASE A FAMILY"/>
    <property type="match status" value="1"/>
</dbReference>
<dbReference type="PANTHER" id="PTHR24138:SF12">
    <property type="entry name" value="PATATIN FAMILY PROTEIN"/>
    <property type="match status" value="1"/>
</dbReference>
<dbReference type="Pfam" id="PF01734">
    <property type="entry name" value="Patatin"/>
    <property type="match status" value="1"/>
</dbReference>
<dbReference type="SUPFAM" id="SSF52151">
    <property type="entry name" value="FabD/lysophospholipase-like"/>
    <property type="match status" value="1"/>
</dbReference>
<dbReference type="PROSITE" id="PS51635">
    <property type="entry name" value="PNPLA"/>
    <property type="match status" value="1"/>
</dbReference>
<reference key="1">
    <citation type="submission" date="2013-10" db="EMBL/GenBank/DDBJ databases">
        <title>The Genome Sequence of Pseudomonas aeruginosa BWHPSA011.</title>
        <authorList>
            <person name="Hung D."/>
            <person name="Penaranda C."/>
            <person name="Poulsen B."/>
            <person name="Young S.K."/>
            <person name="Zeng Q."/>
            <person name="Gargeya S."/>
            <person name="Fitzgerald M."/>
            <person name="Abouelleil A."/>
            <person name="Alvarado L."/>
            <person name="Chapman S.B."/>
            <person name="Gainer-Dewar J."/>
            <person name="Goldberg J."/>
            <person name="Griggs A."/>
            <person name="Gujja S."/>
            <person name="Hansen M."/>
            <person name="Howarth C."/>
            <person name="Imamovic A."/>
            <person name="Ireland A."/>
            <person name="Larimer J."/>
            <person name="McCowan C."/>
            <person name="Murphy C."/>
            <person name="Pearson M."/>
            <person name="Poon T.W."/>
            <person name="Priest M."/>
            <person name="Roberts A."/>
            <person name="Saif S."/>
            <person name="Shea T."/>
            <person name="Sykes S."/>
            <person name="Wortman J."/>
            <person name="Nusbaum C."/>
            <person name="Birren B."/>
        </authorList>
    </citation>
    <scope>NUCLEOTIDE SEQUENCE [LARGE SCALE GENOMIC DNA]</scope>
    <source>
        <strain>BWHPSA011 / Pa011</strain>
    </source>
</reference>
<reference key="2">
    <citation type="journal article" date="2019" name="Nature">
        <title>Bacterial cGAS-like enzymes synthesize diverse nucleotide signals.</title>
        <authorList>
            <person name="Whiteley A.T."/>
            <person name="Eaglesham J.B."/>
            <person name="de Oliveira Mann C.C."/>
            <person name="Morehouse B.R."/>
            <person name="Lowey B."/>
            <person name="Nieminen E.A."/>
            <person name="Danilchanka O."/>
            <person name="King D.S."/>
            <person name="Lee A.S.Y."/>
            <person name="Mekalanos J.J."/>
            <person name="Kranzusch P.J."/>
        </authorList>
    </citation>
    <scope>NOMENCLATURE</scope>
    <scope>SIMILARITY</scope>
</reference>
<reference key="3">
    <citation type="journal article" date="2023" name="Cell">
        <title>Bacteriophages inhibit and evade cGAS-like immune function in bacteria.</title>
        <authorList>
            <person name="Huiting E."/>
            <person name="Cao X."/>
            <person name="Ren J."/>
            <person name="Athukoralage J.S."/>
            <person name="Luo Z."/>
            <person name="Silas S."/>
            <person name="An N."/>
            <person name="Carion H."/>
            <person name="Zhou Y."/>
            <person name="Fraser J.S."/>
            <person name="Feng Y."/>
            <person name="Bondy-Denomy J."/>
        </authorList>
    </citation>
    <scope>ANTIVIRAL DEFENSE</scope>
    <scope>FUNCTION AS A PHOSPHOLIPASE</scope>
    <scope>ACTIVITY REGULATION</scope>
    <scope>DISRUPTION PHENOTYPE</scope>
    <scope>MUTAGENESIS OF SER-48</scope>
    <source>
        <strain>BWHPSA011 / Pa011</strain>
    </source>
</reference>
<evidence type="ECO:0000250" key="1">
    <source>
        <dbReference type="UniProtKB" id="Q9KVG8"/>
    </source>
</evidence>
<evidence type="ECO:0000255" key="2">
    <source>
        <dbReference type="PROSITE-ProRule" id="PRU01161"/>
    </source>
</evidence>
<evidence type="ECO:0000269" key="3">
    <source>
    </source>
</evidence>
<evidence type="ECO:0000303" key="4">
    <source>
    </source>
</evidence>
<evidence type="ECO:0000303" key="5">
    <source>
    </source>
</evidence>
<evidence type="ECO:0000305" key="6"/>
<evidence type="ECO:0000305" key="7">
    <source>
    </source>
</evidence>
<accession>P0DX85</accession>
<sequence length="333" mass="35817">MTGIPTYHVLALSGGGYRGLYTATVLAELETVLGRPIASHFDLICGTSAGGMLALGLAAEIPAYELKALFEEQGSRIFGCRSLPRRLLGFWLTAKHDSAGLKEVLTERFQGTTIGDLKHRVLVPAVNYSTGRGQFFKTPHHPSFELDHRMKVVDVALATAAAPVYFPLARNDRGVFADGGLVGNAPGLFGLHEVKTFLAPKQDALVRVLAIGTMTIGATVRGGASLDRGFGKWRGGLFDLVISAQESSVDHMLRQALGNNYFQIDDKATPDQSKDVKALDRVSIGATNTLKDRGNHAAQRALGDPLFQPFRAHQADAPIFYHGPNKNVPEAAC</sequence>